<dbReference type="EMBL" id="AC013353">
    <property type="protein sequence ID" value="AAX79728.1"/>
    <property type="status" value="ALT_INIT"/>
    <property type="molecule type" value="Genomic_DNA"/>
</dbReference>
<dbReference type="EMBL" id="CP000069">
    <property type="protein sequence ID" value="AAZ11730.1"/>
    <property type="status" value="ALT_INIT"/>
    <property type="molecule type" value="Genomic_DNA"/>
</dbReference>
<dbReference type="RefSeq" id="XP_845289.1">
    <property type="nucleotide sequence ID" value="XM_840196.1"/>
</dbReference>
<dbReference type="STRING" id="185431.Q585P3"/>
<dbReference type="PaxDb" id="5691-AAZ11730"/>
<dbReference type="GeneID" id="3657804"/>
<dbReference type="KEGG" id="tbr:Tb927.6.1680"/>
<dbReference type="eggNOG" id="ENOG502RW3S">
    <property type="taxonomic scope" value="Eukaryota"/>
</dbReference>
<dbReference type="InParanoid" id="Q585P3"/>
<dbReference type="OrthoDB" id="5803930at2759"/>
<dbReference type="Proteomes" id="UP000008524">
    <property type="component" value="Chromosome 6"/>
</dbReference>
<dbReference type="GO" id="GO:0031019">
    <property type="term" value="C:mitochondrial mRNA editing complex"/>
    <property type="evidence" value="ECO:0000314"/>
    <property type="project" value="UniProtKB"/>
</dbReference>
<dbReference type="GO" id="GO:0005739">
    <property type="term" value="C:mitochondrion"/>
    <property type="evidence" value="ECO:0000314"/>
    <property type="project" value="UniProtKB"/>
</dbReference>
<dbReference type="GO" id="GO:0005634">
    <property type="term" value="C:nucleus"/>
    <property type="evidence" value="ECO:0000318"/>
    <property type="project" value="GO_Central"/>
</dbReference>
<dbReference type="GO" id="GO:0000981">
    <property type="term" value="F:DNA-binding transcription factor activity, RNA polymerase II-specific"/>
    <property type="evidence" value="ECO:0000318"/>
    <property type="project" value="GO_Central"/>
</dbReference>
<dbReference type="GO" id="GO:0043565">
    <property type="term" value="F:sequence-specific DNA binding"/>
    <property type="evidence" value="ECO:0000318"/>
    <property type="project" value="GO_Central"/>
</dbReference>
<dbReference type="GO" id="GO:0008270">
    <property type="term" value="F:zinc ion binding"/>
    <property type="evidence" value="ECO:0007669"/>
    <property type="project" value="UniProtKB-KW"/>
</dbReference>
<dbReference type="GO" id="GO:0000963">
    <property type="term" value="P:mitochondrial RNA processing"/>
    <property type="evidence" value="ECO:0000314"/>
    <property type="project" value="UniProtKB"/>
</dbReference>
<dbReference type="GO" id="GO:0006397">
    <property type="term" value="P:mRNA processing"/>
    <property type="evidence" value="ECO:0007669"/>
    <property type="project" value="UniProtKB-KW"/>
</dbReference>
<dbReference type="GO" id="GO:0010608">
    <property type="term" value="P:post-transcriptional regulation of gene expression"/>
    <property type="evidence" value="ECO:0000314"/>
    <property type="project" value="GeneDB"/>
</dbReference>
<dbReference type="GO" id="GO:0006357">
    <property type="term" value="P:regulation of transcription by RNA polymerase II"/>
    <property type="evidence" value="ECO:0000318"/>
    <property type="project" value="GO_Central"/>
</dbReference>
<dbReference type="GO" id="GO:0006396">
    <property type="term" value="P:RNA processing"/>
    <property type="evidence" value="ECO:0000314"/>
    <property type="project" value="GeneDB"/>
</dbReference>
<dbReference type="Gene3D" id="3.30.160.60">
    <property type="entry name" value="Classic Zinc Finger"/>
    <property type="match status" value="3"/>
</dbReference>
<dbReference type="InterPro" id="IPR050688">
    <property type="entry name" value="Zinc_finger/UBP_domain"/>
</dbReference>
<dbReference type="InterPro" id="IPR022755">
    <property type="entry name" value="Znf_C2H2_jaz"/>
</dbReference>
<dbReference type="InterPro" id="IPR013087">
    <property type="entry name" value="Znf_C2H2_type"/>
</dbReference>
<dbReference type="PANTHER" id="PTHR24403:SF67">
    <property type="entry name" value="FI01116P-RELATED"/>
    <property type="match status" value="1"/>
</dbReference>
<dbReference type="PANTHER" id="PTHR24403">
    <property type="entry name" value="ZINC FINGER PROTEIN"/>
    <property type="match status" value="1"/>
</dbReference>
<dbReference type="Pfam" id="PF13912">
    <property type="entry name" value="zf-C2H2_6"/>
    <property type="match status" value="1"/>
</dbReference>
<dbReference type="Pfam" id="PF12171">
    <property type="entry name" value="zf-C2H2_jaz"/>
    <property type="match status" value="1"/>
</dbReference>
<dbReference type="Pfam" id="PF12874">
    <property type="entry name" value="zf-met"/>
    <property type="match status" value="1"/>
</dbReference>
<dbReference type="SMART" id="SM00355">
    <property type="entry name" value="ZnF_C2H2"/>
    <property type="match status" value="8"/>
</dbReference>
<dbReference type="PROSITE" id="PS00028">
    <property type="entry name" value="ZINC_FINGER_C2H2_1"/>
    <property type="match status" value="5"/>
</dbReference>
<dbReference type="PROSITE" id="PS50157">
    <property type="entry name" value="ZINC_FINGER_C2H2_2"/>
    <property type="match status" value="4"/>
</dbReference>
<sequence length="524" mass="58050">MRRWLVASMAPQLHQLLQPVRRCHHPLRIPSVQLAAPRSHTHEDIAYASCPACSRVVHMCDMLTHLITAHRELDQTHCRKMCTERLALYERVIGVPLKKSELTSSGRRVLDFLPTVLPTGYMCNWCDRRSDVYATRDKFLKHVADVHTDIDLEEVEPHVPLPPRGVVVEKSNGDGGPQPTRRLNGVVAVAEKSEPINAVPRILGISLPRGVDRPLKATAQFSDTEFPCELCNRTFNSEIDLLQHLETRHPDGTAEGPAGVDSAAIADVAQFSAKEATTGGDQRVHVICDLCVSSSKVYKMPSALFSHIRFKHPNEDAAFHVERLIREQKTVSSFVCTVCQKAFASAAALDGHFNSKHAEQGEAQNVVGRVTANNCWWCHDCEKGFSSAKGLHGHMQNKHGLSSQTHPCPACKRVFADIYSLEEHLSLQHKTIRLSDIGLLTHVKCSTCERFFLSHEDLHRHAVKHHKKDPRAPAQPFEAPTSASHVAASTSAAVPSEVEATASPQGPRKVKKRKKTTEVSEVTS</sequence>
<protein>
    <recommendedName>
        <fullName evidence="6">REH2-associated factor 1</fullName>
    </recommendedName>
</protein>
<reference evidence="8" key="1">
    <citation type="submission" date="1999-11" db="EMBL/GenBank/DDBJ databases">
        <authorList>
            <person name="Ghedin E."/>
            <person name="Blandin G."/>
            <person name="Bartholomeu D."/>
            <person name="Caler E."/>
            <person name="Haas B."/>
            <person name="Hannick L."/>
            <person name="Shallom J."/>
            <person name="Hou L."/>
            <person name="Djikeng A."/>
            <person name="Feldblyum T."/>
            <person name="Hostetler J."/>
            <person name="Johnson J."/>
            <person name="Jones K."/>
            <person name="Koo H.L."/>
            <person name="Larkin C."/>
            <person name="Pai G."/>
            <person name="Peterson J."/>
            <person name="Khalak H.G."/>
            <person name="Salzberg S."/>
            <person name="Simpson A.J."/>
            <person name="Tallon L."/>
            <person name="Van Aken S."/>
            <person name="Wanless D."/>
            <person name="White O."/>
            <person name="Wortman J."/>
            <person name="Fraser C.M."/>
            <person name="El-Sayed N.M.A."/>
        </authorList>
    </citation>
    <scope>NUCLEOTIDE SEQUENCE [GENOMIC DNA]</scope>
    <source>
        <strain evidence="8">927/4 GUTat10.1</strain>
    </source>
</reference>
<reference evidence="9" key="2">
    <citation type="journal article" date="2005" name="Science">
        <title>Comparative genomics of trypanosomatid parasitic protozoa.</title>
        <authorList>
            <person name="El-Sayed N.M."/>
            <person name="Myler P.J."/>
            <person name="Blandin G."/>
            <person name="Berriman M."/>
            <person name="Crabtree J."/>
            <person name="Aggarwal G."/>
            <person name="Caler E."/>
            <person name="Renauld H."/>
            <person name="Worthey E.A."/>
            <person name="Hertz-Fowler C."/>
            <person name="Ghedin E."/>
            <person name="Peacock C."/>
            <person name="Bartholomeu D.C."/>
            <person name="Haas B.J."/>
            <person name="Tran A.N."/>
            <person name="Wortman J.R."/>
            <person name="Alsmark U.C."/>
            <person name="Angiuoli S."/>
            <person name="Anupama A."/>
            <person name="Badger J."/>
            <person name="Bringaud F."/>
            <person name="Cadag E."/>
            <person name="Carlton J.M."/>
            <person name="Cerqueira G.C."/>
            <person name="Creasy T."/>
            <person name="Delcher A.L."/>
            <person name="Djikeng A."/>
            <person name="Embley T.M."/>
            <person name="Hauser C."/>
            <person name="Ivens A.C."/>
            <person name="Kummerfeld S.K."/>
            <person name="Pereira-Leal J.B."/>
            <person name="Nilsson D."/>
            <person name="Peterson J."/>
            <person name="Salzberg S.L."/>
            <person name="Shallom J."/>
            <person name="Silva J.C."/>
            <person name="Sundaram J."/>
            <person name="Westenberger S."/>
            <person name="White O."/>
            <person name="Melville S.E."/>
            <person name="Donelson J.E."/>
            <person name="Andersson B."/>
            <person name="Stuart K.D."/>
            <person name="Hall N."/>
        </authorList>
    </citation>
    <scope>NUCLEOTIDE SEQUENCE [LARGE SCALE GENOMIC DNA]</scope>
    <source>
        <strain evidence="9">927/4 GUTat10.1</strain>
    </source>
</reference>
<reference evidence="10" key="3">
    <citation type="journal article" date="2005" name="Science">
        <title>The genome of the African trypanosome Trypanosoma brucei.</title>
        <authorList>
            <person name="Berriman M."/>
            <person name="Ghedin E."/>
            <person name="Hertz-Fowler C."/>
            <person name="Blandin G."/>
            <person name="Renauld H."/>
            <person name="Bartholomeu D.C."/>
            <person name="Lennard N.J."/>
            <person name="Caler E."/>
            <person name="Hamlin N.E."/>
            <person name="Haas B."/>
            <person name="Bohme U."/>
            <person name="Hannick L."/>
            <person name="Aslett M.A."/>
            <person name="Shallom J."/>
            <person name="Marcello L."/>
            <person name="Hou L."/>
            <person name="Wickstead B."/>
            <person name="Alsmark U.C.M."/>
            <person name="Arrowsmith C."/>
            <person name="Atkin R.J."/>
            <person name="Barron A.J."/>
            <person name="Bringaud F."/>
            <person name="Brooks K."/>
            <person name="Carrington M."/>
            <person name="Cherevach I."/>
            <person name="Chillingworth T.J."/>
            <person name="Churcher C."/>
            <person name="Clark L.N."/>
            <person name="Corton C.H."/>
            <person name="Cronin A."/>
            <person name="Davies R.M."/>
            <person name="Doggett J."/>
            <person name="Djikeng A."/>
            <person name="Feldblyum T."/>
            <person name="Field M.C."/>
            <person name="Fraser A."/>
            <person name="Goodhead I."/>
            <person name="Hance Z."/>
            <person name="Harper D."/>
            <person name="Harris B.R."/>
            <person name="Hauser H."/>
            <person name="Hostetler J."/>
            <person name="Ivens A."/>
            <person name="Jagels K."/>
            <person name="Johnson D."/>
            <person name="Johnson J."/>
            <person name="Jones K."/>
            <person name="Kerhornou A.X."/>
            <person name="Koo H."/>
            <person name="Larke N."/>
            <person name="Landfear S."/>
            <person name="Larkin C."/>
            <person name="Leech V."/>
            <person name="Line A."/>
            <person name="Lord A."/>
            <person name="Macleod A."/>
            <person name="Mooney P.J."/>
            <person name="Moule S."/>
            <person name="Martin D.M."/>
            <person name="Morgan G.W."/>
            <person name="Mungall K."/>
            <person name="Norbertczak H."/>
            <person name="Ormond D."/>
            <person name="Pai G."/>
            <person name="Peacock C.S."/>
            <person name="Peterson J."/>
            <person name="Quail M.A."/>
            <person name="Rabbinowitsch E."/>
            <person name="Rajandream M.A."/>
            <person name="Reitter C."/>
            <person name="Salzberg S.L."/>
            <person name="Sanders M."/>
            <person name="Schobel S."/>
            <person name="Sharp S."/>
            <person name="Simmonds M."/>
            <person name="Simpson A.J."/>
            <person name="Tallon L."/>
            <person name="Turner C.M."/>
            <person name="Tait A."/>
            <person name="Tivey A.R."/>
            <person name="Van Aken S."/>
            <person name="Walker D."/>
            <person name="Wanless D."/>
            <person name="Wang S."/>
            <person name="White B."/>
            <person name="White O."/>
            <person name="Whitehead S."/>
            <person name="Woodward J."/>
            <person name="Wortman J."/>
            <person name="Adams M.D."/>
            <person name="Embley T.M."/>
            <person name="Gull K."/>
            <person name="Ullu E."/>
            <person name="Barry J.D."/>
            <person name="Fairlamb A.H."/>
            <person name="Opperdoes F."/>
            <person name="Barrell B.G."/>
            <person name="Donelson J.E."/>
            <person name="Hall N."/>
            <person name="Fraser C.M."/>
            <person name="Melville S.E."/>
            <person name="El-Sayed N.M.A."/>
        </authorList>
    </citation>
    <scope>NUCLEOTIDE SEQUENCE [LARGE SCALE GENOMIC DNA]</scope>
    <source>
        <strain evidence="10">927/4 GUTat10.1</strain>
    </source>
</reference>
<reference evidence="7" key="4">
    <citation type="journal article" date="2016" name="J. Biol. Chem.">
        <title>REH2C Helicase and GRBC Subcomplexes May Base Pair through mRNA and Small Guide RNA in Kinetoplastid Editosomes.</title>
        <authorList>
            <person name="Kumar V."/>
            <person name="Madina B.R."/>
            <person name="Gulati S."/>
            <person name="Vashisht A.A."/>
            <person name="Kanyumbu C."/>
            <person name="Pieters B."/>
            <person name="Shakir A."/>
            <person name="Wohlschlegel J.A."/>
            <person name="Read L.K."/>
            <person name="Mooers B.H.M."/>
            <person name="Cruz-Reyes J."/>
        </authorList>
    </citation>
    <scope>FUNCTION</scope>
    <scope>IDENTIFICATION IN THE REH2C COMPLEX</scope>
    <scope>INTERACTION WITH THE GRBC COMPLEX; RECC COMPLEX; REMC COMPLEX AND REH2</scope>
    <scope>SUBCELLULAR LOCATION</scope>
    <scope>DEVELOPMENTAL STAGE</scope>
    <scope>DISRUPTION PHENOTYPE</scope>
    <source>
        <strain evidence="4">427</strain>
    </source>
</reference>
<reference evidence="7" key="5">
    <citation type="journal article" date="2019" name="PLoS ONE">
        <title>Protein features for assembly of the RNA editing helicase 2 subcomplex (REH2C) in Trypanosome holo-editosomes.</title>
        <authorList>
            <person name="Kumar V."/>
            <person name="Doharey P.K."/>
            <person name="Gulati S."/>
            <person name="Meehan J."/>
            <person name="Martinez M.G."/>
            <person name="Hughes K."/>
            <person name="Mooers B.H.M."/>
            <person name="Cruz-Reyes J."/>
        </authorList>
    </citation>
    <scope>FUNCTION</scope>
    <scope>IDENTIFICATION IN THE REH2C COMPLEX</scope>
    <scope>INTERACTION WITH THE GRBC COMPLEX; RECC COMPLEX AND REMC COMPLEX</scope>
    <scope>SUBCELLULAR LOCATION</scope>
    <scope>DEVELOPMENTAL STAGE</scope>
    <scope>DISRUPTION PHENOTYPE</scope>
    <source>
        <strain evidence="5">427</strain>
    </source>
</reference>
<accession>Q585P3</accession>
<accession>D6XHQ1</accession>
<comment type="function">
    <text evidence="4 5">Plays an important role in mitochondrial mRNA editing by promoting the assembly of the mRNA editosome (PubMed:26769962, PubMed:31034523). Facilitates the recruitment of mRNA to the REH2C complex and promotes the interaction between various editing complexes including REH2C, GRBC, REMC and RECC complexes (PubMed:26769962, PubMed:31034523).</text>
</comment>
<comment type="subunit">
    <text evidence="4 5">Component of the REH2-associated complex (REH2C) composed of helicase REH2, associated factors H2F1 and H2F2, and mRNAs at various editing stages; the formation of the complex is RNA-independent (PubMed:26769962, PubMed:31034523). Within the complex, interacts with REH2; the interaction is direct (PubMed:26769962). Interacts with various editing complexes including the RNA editing core (RECC) complex, the gRNA-binding (GRBC) complex (also known as the MRB1 complex) and the RNA editing mediator (REMC) complex (PubMed:26769962, PubMed:31034523).</text>
</comment>
<comment type="subcellular location">
    <subcellularLocation>
        <location evidence="4 5">Mitochondrion</location>
    </subcellularLocation>
</comment>
<comment type="developmental stage">
    <text evidence="4 5">Expressed at the procyclic stage (at protein level).</text>
</comment>
<comment type="disruption phenotype">
    <text evidence="4 5">RNAi-mediated knockdown at the procyclic stage causes a reduction in mitochondrial mRNA editing (PubMed:26769962). Formation of the REH2C complex is not affected but REH2C complex association with the GRBC, REMC, RECC complexes and with and pre-mRNA is impaired (PubMed:26769962). Integrity of the GRBC complex is not affected but GRBC complex association with the RECC complex and pre-mRNA is reduced (PubMed:26769962). Causes a slight decrease in REH2 protein levels (PubMed:26769962, PubMed:31034523). Does not affect the RNA unwinding activity of the REH2C complex (PubMed:26769962).</text>
</comment>
<comment type="sequence caution" evidence="7">
    <conflict type="erroneous initiation">
        <sequence resource="EMBL-CDS" id="AAX79728"/>
    </conflict>
    <text>Extended N-terminus.</text>
</comment>
<comment type="sequence caution" evidence="7">
    <conflict type="erroneous initiation">
        <sequence resource="EMBL-CDS" id="AAZ11730"/>
    </conflict>
    <text>Extended N-terminus.</text>
</comment>
<gene>
    <name evidence="6" type="primary">H2F1</name>
    <name evidence="8" type="ORF">Tb927.6.1680</name>
</gene>
<keyword id="KW-0479">Metal-binding</keyword>
<keyword id="KW-0496">Mitochondrion</keyword>
<keyword id="KW-0507">mRNA processing</keyword>
<keyword id="KW-1185">Reference proteome</keyword>
<keyword id="KW-0677">Repeat</keyword>
<keyword id="KW-0809">Transit peptide</keyword>
<keyword id="KW-0862">Zinc</keyword>
<keyword id="KW-0863">Zinc-finger</keyword>
<name>H2F1_TRYB2</name>
<organism evidence="10">
    <name type="scientific">Trypanosoma brucei brucei (strain 927/4 GUTat10.1)</name>
    <dbReference type="NCBI Taxonomy" id="185431"/>
    <lineage>
        <taxon>Eukaryota</taxon>
        <taxon>Discoba</taxon>
        <taxon>Euglenozoa</taxon>
        <taxon>Kinetoplastea</taxon>
        <taxon>Metakinetoplastina</taxon>
        <taxon>Trypanosomatida</taxon>
        <taxon>Trypanosomatidae</taxon>
        <taxon>Trypanosoma</taxon>
    </lineage>
</organism>
<feature type="transit peptide" description="Mitochondrion" evidence="1">
    <location>
        <begin position="1"/>
        <end position="22"/>
    </location>
</feature>
<feature type="chain" id="PRO_0000455619" description="REH2-associated factor 1" evidence="1">
    <location>
        <begin position="23"/>
        <end position="524"/>
    </location>
</feature>
<feature type="zinc finger region" description="C2H2-type 1; atypical" evidence="1">
    <location>
        <begin position="48"/>
        <end position="70"/>
    </location>
</feature>
<feature type="zinc finger region" description="C2H2-type 2; atypical" evidence="1">
    <location>
        <begin position="121"/>
        <end position="147"/>
    </location>
</feature>
<feature type="zinc finger region" description="C2H2-type 4" evidence="2">
    <location>
        <begin position="226"/>
        <end position="249"/>
    </location>
</feature>
<feature type="zinc finger region" description="C2H2-type 3; atypical" evidence="1">
    <location>
        <begin position="286"/>
        <end position="312"/>
    </location>
</feature>
<feature type="zinc finger region" description="C2H2-type 5" evidence="2">
    <location>
        <begin position="334"/>
        <end position="357"/>
    </location>
</feature>
<feature type="zinc finger region" description="C2H2-type 6" evidence="2">
    <location>
        <begin position="376"/>
        <end position="399"/>
    </location>
</feature>
<feature type="zinc finger region" description="C2H2-type 7" evidence="2">
    <location>
        <begin position="406"/>
        <end position="429"/>
    </location>
</feature>
<feature type="zinc finger region" description="C2H2-type 8" evidence="2">
    <location>
        <begin position="443"/>
        <end position="465"/>
    </location>
</feature>
<feature type="region of interest" description="Disordered" evidence="3">
    <location>
        <begin position="463"/>
        <end position="524"/>
    </location>
</feature>
<feature type="compositionally biased region" description="Low complexity" evidence="3">
    <location>
        <begin position="479"/>
        <end position="500"/>
    </location>
</feature>
<evidence type="ECO:0000255" key="1"/>
<evidence type="ECO:0000255" key="2">
    <source>
        <dbReference type="PROSITE-ProRule" id="PRU00042"/>
    </source>
</evidence>
<evidence type="ECO:0000256" key="3">
    <source>
        <dbReference type="SAM" id="MobiDB-lite"/>
    </source>
</evidence>
<evidence type="ECO:0000269" key="4">
    <source>
    </source>
</evidence>
<evidence type="ECO:0000269" key="5">
    <source>
    </source>
</evidence>
<evidence type="ECO:0000303" key="6">
    <source>
    </source>
</evidence>
<evidence type="ECO:0000305" key="7"/>
<evidence type="ECO:0000312" key="8">
    <source>
        <dbReference type="EMBL" id="AAX79728.1"/>
    </source>
</evidence>
<evidence type="ECO:0000312" key="9">
    <source>
        <dbReference type="EMBL" id="AAZ11730.1"/>
    </source>
</evidence>
<evidence type="ECO:0000312" key="10">
    <source>
        <dbReference type="Proteomes" id="UP000008524"/>
    </source>
</evidence>
<proteinExistence type="evidence at protein level"/>